<gene>
    <name evidence="1" type="primary">rpsB</name>
    <name type="ordered locus">Cag_1648</name>
</gene>
<evidence type="ECO:0000255" key="1">
    <source>
        <dbReference type="HAMAP-Rule" id="MF_00291"/>
    </source>
</evidence>
<evidence type="ECO:0000305" key="2"/>
<accession>Q3AQ25</accession>
<proteinExistence type="inferred from homology"/>
<protein>
    <recommendedName>
        <fullName evidence="1">Small ribosomal subunit protein uS2</fullName>
    </recommendedName>
    <alternativeName>
        <fullName evidence="2">30S ribosomal protein S2</fullName>
    </alternativeName>
</protein>
<organism>
    <name type="scientific">Chlorobium chlorochromatii (strain CaD3)</name>
    <dbReference type="NCBI Taxonomy" id="340177"/>
    <lineage>
        <taxon>Bacteria</taxon>
        <taxon>Pseudomonadati</taxon>
        <taxon>Chlorobiota</taxon>
        <taxon>Chlorobiia</taxon>
        <taxon>Chlorobiales</taxon>
        <taxon>Chlorobiaceae</taxon>
        <taxon>Chlorobium/Pelodictyon group</taxon>
        <taxon>Chlorobium</taxon>
    </lineage>
</organism>
<sequence length="251" mass="28435">MSHFQVEDMLRAGVHFGHLARRWCPKMKPYIFMEKNGVHIIDLQKTAELANTALKALEAIAQTGREIMFVGTKKQAKVIIAEQATRSNMPYVSERWLGGMLTNFQTIRQSIRRMNSIDRMATDGTYDMITKKERLMLGREREKLMRILGGIATMNRLPAALFVVDIKKEHLAIKEARTLGIPVFAMVDTNCDPELVDYVIPANDDAIRSIQLMVKAVADTIINARELKVEQEVLATMDEAEVEGDKEDISE</sequence>
<name>RS2_CHLCH</name>
<dbReference type="EMBL" id="CP000108">
    <property type="protein sequence ID" value="ABB28900.1"/>
    <property type="status" value="ALT_INIT"/>
    <property type="molecule type" value="Genomic_DNA"/>
</dbReference>
<dbReference type="SMR" id="Q3AQ25"/>
<dbReference type="STRING" id="340177.Cag_1648"/>
<dbReference type="KEGG" id="cch:Cag_1648"/>
<dbReference type="eggNOG" id="COG0052">
    <property type="taxonomic scope" value="Bacteria"/>
</dbReference>
<dbReference type="HOGENOM" id="CLU_040318_1_2_10"/>
<dbReference type="OrthoDB" id="9808036at2"/>
<dbReference type="GO" id="GO:0022627">
    <property type="term" value="C:cytosolic small ribosomal subunit"/>
    <property type="evidence" value="ECO:0007669"/>
    <property type="project" value="TreeGrafter"/>
</dbReference>
<dbReference type="GO" id="GO:0003735">
    <property type="term" value="F:structural constituent of ribosome"/>
    <property type="evidence" value="ECO:0007669"/>
    <property type="project" value="InterPro"/>
</dbReference>
<dbReference type="GO" id="GO:0006412">
    <property type="term" value="P:translation"/>
    <property type="evidence" value="ECO:0007669"/>
    <property type="project" value="UniProtKB-UniRule"/>
</dbReference>
<dbReference type="CDD" id="cd01425">
    <property type="entry name" value="RPS2"/>
    <property type="match status" value="1"/>
</dbReference>
<dbReference type="FunFam" id="1.10.287.610:FF:000001">
    <property type="entry name" value="30S ribosomal protein S2"/>
    <property type="match status" value="1"/>
</dbReference>
<dbReference type="Gene3D" id="3.40.50.10490">
    <property type="entry name" value="Glucose-6-phosphate isomerase like protein, domain 1"/>
    <property type="match status" value="1"/>
</dbReference>
<dbReference type="Gene3D" id="1.10.287.610">
    <property type="entry name" value="Helix hairpin bin"/>
    <property type="match status" value="1"/>
</dbReference>
<dbReference type="HAMAP" id="MF_00291_B">
    <property type="entry name" value="Ribosomal_uS2_B"/>
    <property type="match status" value="1"/>
</dbReference>
<dbReference type="InterPro" id="IPR001865">
    <property type="entry name" value="Ribosomal_uS2"/>
</dbReference>
<dbReference type="InterPro" id="IPR005706">
    <property type="entry name" value="Ribosomal_uS2_bac/mit/plastid"/>
</dbReference>
<dbReference type="InterPro" id="IPR018130">
    <property type="entry name" value="Ribosomal_uS2_CS"/>
</dbReference>
<dbReference type="InterPro" id="IPR023591">
    <property type="entry name" value="Ribosomal_uS2_flav_dom_sf"/>
</dbReference>
<dbReference type="NCBIfam" id="TIGR01011">
    <property type="entry name" value="rpsB_bact"/>
    <property type="match status" value="1"/>
</dbReference>
<dbReference type="PANTHER" id="PTHR12534">
    <property type="entry name" value="30S RIBOSOMAL PROTEIN S2 PROKARYOTIC AND ORGANELLAR"/>
    <property type="match status" value="1"/>
</dbReference>
<dbReference type="PANTHER" id="PTHR12534:SF0">
    <property type="entry name" value="SMALL RIBOSOMAL SUBUNIT PROTEIN US2M"/>
    <property type="match status" value="1"/>
</dbReference>
<dbReference type="Pfam" id="PF00318">
    <property type="entry name" value="Ribosomal_S2"/>
    <property type="match status" value="1"/>
</dbReference>
<dbReference type="PRINTS" id="PR00395">
    <property type="entry name" value="RIBOSOMALS2"/>
</dbReference>
<dbReference type="SUPFAM" id="SSF52313">
    <property type="entry name" value="Ribosomal protein S2"/>
    <property type="match status" value="1"/>
</dbReference>
<dbReference type="PROSITE" id="PS00962">
    <property type="entry name" value="RIBOSOMAL_S2_1"/>
    <property type="match status" value="1"/>
</dbReference>
<dbReference type="PROSITE" id="PS00963">
    <property type="entry name" value="RIBOSOMAL_S2_2"/>
    <property type="match status" value="1"/>
</dbReference>
<comment type="similarity">
    <text evidence="1">Belongs to the universal ribosomal protein uS2 family.</text>
</comment>
<comment type="sequence caution" evidence="2">
    <conflict type="erroneous initiation">
        <sequence resource="EMBL-CDS" id="ABB28900"/>
    </conflict>
</comment>
<keyword id="KW-0687">Ribonucleoprotein</keyword>
<keyword id="KW-0689">Ribosomal protein</keyword>
<feature type="chain" id="PRO_0000351986" description="Small ribosomal subunit protein uS2">
    <location>
        <begin position="1"/>
        <end position="251"/>
    </location>
</feature>
<reference key="1">
    <citation type="submission" date="2005-08" db="EMBL/GenBank/DDBJ databases">
        <title>Complete sequence of Chlorobium chlorochromatii CaD3.</title>
        <authorList>
            <consortium name="US DOE Joint Genome Institute"/>
            <person name="Copeland A."/>
            <person name="Lucas S."/>
            <person name="Lapidus A."/>
            <person name="Barry K."/>
            <person name="Detter J.C."/>
            <person name="Glavina T."/>
            <person name="Hammon N."/>
            <person name="Israni S."/>
            <person name="Pitluck S."/>
            <person name="Bryant D."/>
            <person name="Schmutz J."/>
            <person name="Larimer F."/>
            <person name="Land M."/>
            <person name="Kyrpides N."/>
            <person name="Ivanova N."/>
            <person name="Richardson P."/>
        </authorList>
    </citation>
    <scope>NUCLEOTIDE SEQUENCE [LARGE SCALE GENOMIC DNA]</scope>
    <source>
        <strain>CaD3</strain>
    </source>
</reference>